<protein>
    <recommendedName>
        <fullName>Dehydration-responsive element-binding protein 2B</fullName>
        <shortName>OsDREB2B</shortName>
    </recommendedName>
</protein>
<dbReference type="EMBL" id="AC134927">
    <property type="protein sequence ID" value="AAV43805.1"/>
    <property type="molecule type" value="Genomic_DNA"/>
</dbReference>
<dbReference type="EMBL" id="AC134928">
    <property type="protein sequence ID" value="AAV43810.1"/>
    <property type="molecule type" value="Genomic_DNA"/>
</dbReference>
<dbReference type="EMBL" id="AP008211">
    <property type="protein sequence ID" value="BAF17174.2"/>
    <property type="molecule type" value="Genomic_DNA"/>
</dbReference>
<dbReference type="EMBL" id="AP014961">
    <property type="protein sequence ID" value="BAS93499.1"/>
    <property type="molecule type" value="Genomic_DNA"/>
</dbReference>
<dbReference type="EMBL" id="CM000142">
    <property type="protein sequence ID" value="EEE63347.1"/>
    <property type="molecule type" value="Genomic_DNA"/>
</dbReference>
<dbReference type="EMBL" id="AK071850">
    <property type="protein sequence ID" value="BAG92728.1"/>
    <property type="molecule type" value="mRNA"/>
</dbReference>
<dbReference type="EMBL" id="AK099221">
    <property type="protein sequence ID" value="BAG94003.1"/>
    <property type="molecule type" value="mRNA"/>
</dbReference>
<dbReference type="RefSeq" id="XP_015639655.1">
    <property type="nucleotide sequence ID" value="XM_015784169.1"/>
</dbReference>
<dbReference type="SMR" id="Q5W6R4"/>
<dbReference type="FunCoup" id="Q5W6R4">
    <property type="interactions" value="24"/>
</dbReference>
<dbReference type="STRING" id="39947.Q5W6R4"/>
<dbReference type="PaxDb" id="39947-Q5W6R4"/>
<dbReference type="KEGG" id="dosa:Os05g0346200"/>
<dbReference type="InParanoid" id="Q5W6R4"/>
<dbReference type="OrthoDB" id="550883at2759"/>
<dbReference type="Proteomes" id="UP000000763">
    <property type="component" value="Chromosome 5"/>
</dbReference>
<dbReference type="Proteomes" id="UP000007752">
    <property type="component" value="Chromosome 5"/>
</dbReference>
<dbReference type="Proteomes" id="UP000059680">
    <property type="component" value="Chromosome 5"/>
</dbReference>
<dbReference type="GO" id="GO:0005634">
    <property type="term" value="C:nucleus"/>
    <property type="evidence" value="ECO:0000314"/>
    <property type="project" value="UniProtKB"/>
</dbReference>
<dbReference type="GO" id="GO:0003677">
    <property type="term" value="F:DNA binding"/>
    <property type="evidence" value="ECO:0000314"/>
    <property type="project" value="UniProtKB"/>
</dbReference>
<dbReference type="GO" id="GO:0003700">
    <property type="term" value="F:DNA-binding transcription factor activity"/>
    <property type="evidence" value="ECO:0000318"/>
    <property type="project" value="GO_Central"/>
</dbReference>
<dbReference type="GO" id="GO:0000976">
    <property type="term" value="F:transcription cis-regulatory region binding"/>
    <property type="evidence" value="ECO:0000318"/>
    <property type="project" value="GO_Central"/>
</dbReference>
<dbReference type="GO" id="GO:0045893">
    <property type="term" value="P:positive regulation of DNA-templated transcription"/>
    <property type="evidence" value="ECO:0000314"/>
    <property type="project" value="UniProtKB"/>
</dbReference>
<dbReference type="GO" id="GO:0009408">
    <property type="term" value="P:response to heat"/>
    <property type="evidence" value="ECO:0000315"/>
    <property type="project" value="UniProtKB"/>
</dbReference>
<dbReference type="GO" id="GO:0009651">
    <property type="term" value="P:response to salt stress"/>
    <property type="evidence" value="ECO:0000315"/>
    <property type="project" value="UniProtKB"/>
</dbReference>
<dbReference type="GO" id="GO:0006950">
    <property type="term" value="P:response to stress"/>
    <property type="evidence" value="ECO:0000318"/>
    <property type="project" value="GO_Central"/>
</dbReference>
<dbReference type="GO" id="GO:0009414">
    <property type="term" value="P:response to water deprivation"/>
    <property type="evidence" value="ECO:0000315"/>
    <property type="project" value="UniProtKB"/>
</dbReference>
<dbReference type="CDD" id="cd00018">
    <property type="entry name" value="AP2"/>
    <property type="match status" value="1"/>
</dbReference>
<dbReference type="FunFam" id="3.30.730.10:FF:000001">
    <property type="entry name" value="Ethylene-responsive transcription factor 2"/>
    <property type="match status" value="1"/>
</dbReference>
<dbReference type="Gene3D" id="3.30.730.10">
    <property type="entry name" value="AP2/ERF domain"/>
    <property type="match status" value="1"/>
</dbReference>
<dbReference type="InterPro" id="IPR001471">
    <property type="entry name" value="AP2/ERF_dom"/>
</dbReference>
<dbReference type="InterPro" id="IPR036955">
    <property type="entry name" value="AP2/ERF_dom_sf"/>
</dbReference>
<dbReference type="InterPro" id="IPR016177">
    <property type="entry name" value="DNA-bd_dom_sf"/>
</dbReference>
<dbReference type="PANTHER" id="PTHR31241">
    <property type="entry name" value="DEHYDRATION-RESPONSIVE ELEMENT-BINDING PROTEIN 2C"/>
    <property type="match status" value="1"/>
</dbReference>
<dbReference type="PANTHER" id="PTHR31241:SF62">
    <property type="entry name" value="DEHYDRATION-RESPONSIVE ELEMENT-BINDING PROTEIN 2D"/>
    <property type="match status" value="1"/>
</dbReference>
<dbReference type="Pfam" id="PF00847">
    <property type="entry name" value="AP2"/>
    <property type="match status" value="1"/>
</dbReference>
<dbReference type="PRINTS" id="PR00367">
    <property type="entry name" value="ETHRSPELEMNT"/>
</dbReference>
<dbReference type="SMART" id="SM00380">
    <property type="entry name" value="AP2"/>
    <property type="match status" value="1"/>
</dbReference>
<dbReference type="SUPFAM" id="SSF54171">
    <property type="entry name" value="DNA-binding domain"/>
    <property type="match status" value="1"/>
</dbReference>
<dbReference type="PROSITE" id="PS51032">
    <property type="entry name" value="AP2_ERF"/>
    <property type="match status" value="1"/>
</dbReference>
<proteinExistence type="evidence at transcript level"/>
<organism>
    <name type="scientific">Oryza sativa subsp. japonica</name>
    <name type="common">Rice</name>
    <dbReference type="NCBI Taxonomy" id="39947"/>
    <lineage>
        <taxon>Eukaryota</taxon>
        <taxon>Viridiplantae</taxon>
        <taxon>Streptophyta</taxon>
        <taxon>Embryophyta</taxon>
        <taxon>Tracheophyta</taxon>
        <taxon>Spermatophyta</taxon>
        <taxon>Magnoliopsida</taxon>
        <taxon>Liliopsida</taxon>
        <taxon>Poales</taxon>
        <taxon>Poaceae</taxon>
        <taxon>BOP clade</taxon>
        <taxon>Oryzoideae</taxon>
        <taxon>Oryzeae</taxon>
        <taxon>Oryzinae</taxon>
        <taxon>Oryza</taxon>
        <taxon>Oryza sativa</taxon>
    </lineage>
</organism>
<name>DRE2B_ORYSJ</name>
<keyword id="KW-0010">Activator</keyword>
<keyword id="KW-0025">Alternative splicing</keyword>
<keyword id="KW-0238">DNA-binding</keyword>
<keyword id="KW-0539">Nucleus</keyword>
<keyword id="KW-1185">Reference proteome</keyword>
<keyword id="KW-0346">Stress response</keyword>
<keyword id="KW-0804">Transcription</keyword>
<keyword id="KW-0805">Transcription regulation</keyword>
<accession>Q5W6R4</accession>
<accession>B9FP08</accession>
<accession>Q0DIZ9</accession>
<reference key="1">
    <citation type="journal article" date="2005" name="Mol. Genet. Genomics">
        <title>A fine physical map of the rice chromosome 5.</title>
        <authorList>
            <person name="Cheng C.-H."/>
            <person name="Chung M.C."/>
            <person name="Liu S.-M."/>
            <person name="Chen S.-K."/>
            <person name="Kao F.Y."/>
            <person name="Lin S.-J."/>
            <person name="Hsiao S.-H."/>
            <person name="Tseng I.C."/>
            <person name="Hsing Y.-I.C."/>
            <person name="Wu H.-P."/>
            <person name="Chen C.-S."/>
            <person name="Shaw J.-F."/>
            <person name="Wu J."/>
            <person name="Matsumoto T."/>
            <person name="Sasaki T."/>
            <person name="Chen H.-C."/>
            <person name="Chow T.-Y."/>
        </authorList>
    </citation>
    <scope>NUCLEOTIDE SEQUENCE [LARGE SCALE GENOMIC DNA]</scope>
    <source>
        <strain>cv. Nipponbare</strain>
    </source>
</reference>
<reference key="2">
    <citation type="journal article" date="2005" name="Nature">
        <title>The map-based sequence of the rice genome.</title>
        <authorList>
            <consortium name="International rice genome sequencing project (IRGSP)"/>
        </authorList>
    </citation>
    <scope>NUCLEOTIDE SEQUENCE [LARGE SCALE GENOMIC DNA]</scope>
    <source>
        <strain>cv. Nipponbare</strain>
    </source>
</reference>
<reference key="3">
    <citation type="journal article" date="2008" name="Nucleic Acids Res.">
        <title>The rice annotation project database (RAP-DB): 2008 update.</title>
        <authorList>
            <consortium name="The rice annotation project (RAP)"/>
        </authorList>
    </citation>
    <scope>GENOME REANNOTATION</scope>
    <source>
        <strain>cv. Nipponbare</strain>
    </source>
</reference>
<reference key="4">
    <citation type="journal article" date="2013" name="Rice">
        <title>Improvement of the Oryza sativa Nipponbare reference genome using next generation sequence and optical map data.</title>
        <authorList>
            <person name="Kawahara Y."/>
            <person name="de la Bastide M."/>
            <person name="Hamilton J.P."/>
            <person name="Kanamori H."/>
            <person name="McCombie W.R."/>
            <person name="Ouyang S."/>
            <person name="Schwartz D.C."/>
            <person name="Tanaka T."/>
            <person name="Wu J."/>
            <person name="Zhou S."/>
            <person name="Childs K.L."/>
            <person name="Davidson R.M."/>
            <person name="Lin H."/>
            <person name="Quesada-Ocampo L."/>
            <person name="Vaillancourt B."/>
            <person name="Sakai H."/>
            <person name="Lee S.S."/>
            <person name="Kim J."/>
            <person name="Numa H."/>
            <person name="Itoh T."/>
            <person name="Buell C.R."/>
            <person name="Matsumoto T."/>
        </authorList>
    </citation>
    <scope>GENOME REANNOTATION</scope>
    <source>
        <strain>cv. Nipponbare</strain>
    </source>
</reference>
<reference key="5">
    <citation type="journal article" date="2005" name="PLoS Biol.">
        <title>The genomes of Oryza sativa: a history of duplications.</title>
        <authorList>
            <person name="Yu J."/>
            <person name="Wang J."/>
            <person name="Lin W."/>
            <person name="Li S."/>
            <person name="Li H."/>
            <person name="Zhou J."/>
            <person name="Ni P."/>
            <person name="Dong W."/>
            <person name="Hu S."/>
            <person name="Zeng C."/>
            <person name="Zhang J."/>
            <person name="Zhang Y."/>
            <person name="Li R."/>
            <person name="Xu Z."/>
            <person name="Li S."/>
            <person name="Li X."/>
            <person name="Zheng H."/>
            <person name="Cong L."/>
            <person name="Lin L."/>
            <person name="Yin J."/>
            <person name="Geng J."/>
            <person name="Li G."/>
            <person name="Shi J."/>
            <person name="Liu J."/>
            <person name="Lv H."/>
            <person name="Li J."/>
            <person name="Wang J."/>
            <person name="Deng Y."/>
            <person name="Ran L."/>
            <person name="Shi X."/>
            <person name="Wang X."/>
            <person name="Wu Q."/>
            <person name="Li C."/>
            <person name="Ren X."/>
            <person name="Wang J."/>
            <person name="Wang X."/>
            <person name="Li D."/>
            <person name="Liu D."/>
            <person name="Zhang X."/>
            <person name="Ji Z."/>
            <person name="Zhao W."/>
            <person name="Sun Y."/>
            <person name="Zhang Z."/>
            <person name="Bao J."/>
            <person name="Han Y."/>
            <person name="Dong L."/>
            <person name="Ji J."/>
            <person name="Chen P."/>
            <person name="Wu S."/>
            <person name="Liu J."/>
            <person name="Xiao Y."/>
            <person name="Bu D."/>
            <person name="Tan J."/>
            <person name="Yang L."/>
            <person name="Ye C."/>
            <person name="Zhang J."/>
            <person name="Xu J."/>
            <person name="Zhou Y."/>
            <person name="Yu Y."/>
            <person name="Zhang B."/>
            <person name="Zhuang S."/>
            <person name="Wei H."/>
            <person name="Liu B."/>
            <person name="Lei M."/>
            <person name="Yu H."/>
            <person name="Li Y."/>
            <person name="Xu H."/>
            <person name="Wei S."/>
            <person name="He X."/>
            <person name="Fang L."/>
            <person name="Zhang Z."/>
            <person name="Zhang Y."/>
            <person name="Huang X."/>
            <person name="Su Z."/>
            <person name="Tong W."/>
            <person name="Li J."/>
            <person name="Tong Z."/>
            <person name="Li S."/>
            <person name="Ye J."/>
            <person name="Wang L."/>
            <person name="Fang L."/>
            <person name="Lei T."/>
            <person name="Chen C.-S."/>
            <person name="Chen H.-C."/>
            <person name="Xu Z."/>
            <person name="Li H."/>
            <person name="Huang H."/>
            <person name="Zhang F."/>
            <person name="Xu H."/>
            <person name="Li N."/>
            <person name="Zhao C."/>
            <person name="Li S."/>
            <person name="Dong L."/>
            <person name="Huang Y."/>
            <person name="Li L."/>
            <person name="Xi Y."/>
            <person name="Qi Q."/>
            <person name="Li W."/>
            <person name="Zhang B."/>
            <person name="Hu W."/>
            <person name="Zhang Y."/>
            <person name="Tian X."/>
            <person name="Jiao Y."/>
            <person name="Liang X."/>
            <person name="Jin J."/>
            <person name="Gao L."/>
            <person name="Zheng W."/>
            <person name="Hao B."/>
            <person name="Liu S.-M."/>
            <person name="Wang W."/>
            <person name="Yuan L."/>
            <person name="Cao M."/>
            <person name="McDermott J."/>
            <person name="Samudrala R."/>
            <person name="Wang J."/>
            <person name="Wong G.K.-S."/>
            <person name="Yang H."/>
        </authorList>
    </citation>
    <scope>NUCLEOTIDE SEQUENCE [LARGE SCALE GENOMIC DNA]</scope>
    <source>
        <strain>cv. Nipponbare</strain>
    </source>
</reference>
<reference key="6">
    <citation type="journal article" date="2003" name="Science">
        <title>Collection, mapping, and annotation of over 28,000 cDNA clones from japonica rice.</title>
        <authorList>
            <consortium name="The rice full-length cDNA consortium"/>
        </authorList>
    </citation>
    <scope>NUCLEOTIDE SEQUENCE [LARGE SCALE MRNA] (ISOFORM 2)</scope>
    <source>
        <strain>cv. Nipponbare</strain>
    </source>
</reference>
<reference key="7">
    <citation type="journal article" date="2010" name="Mol. Genet. Genomics">
        <title>Comprehensive analysis of rice DREB2-type genes that encode transcription factors involved in the expression of abiotic stress-responsive genes.</title>
        <authorList>
            <person name="Matsukura S."/>
            <person name="Mizoi J."/>
            <person name="Yoshida T."/>
            <person name="Todaka D."/>
            <person name="Ito Y."/>
            <person name="Maruyama K."/>
            <person name="Shinozaki K."/>
            <person name="Yamaguchi-Shinozaki K."/>
        </authorList>
    </citation>
    <scope>FUNCTION</scope>
    <scope>SUBCELLULAR LOCATION</scope>
    <scope>INDUCTION</scope>
    <scope>ALTERNATIVE SPLICING</scope>
</reference>
<evidence type="ECO:0000255" key="1">
    <source>
        <dbReference type="PROSITE-ProRule" id="PRU00366"/>
    </source>
</evidence>
<evidence type="ECO:0000256" key="2">
    <source>
        <dbReference type="SAM" id="MobiDB-lite"/>
    </source>
</evidence>
<evidence type="ECO:0000269" key="3">
    <source>
    </source>
</evidence>
<evidence type="ECO:0000303" key="4">
    <source>
    </source>
</evidence>
<evidence type="ECO:0000305" key="5"/>
<feature type="chain" id="PRO_0000397868" description="Dehydration-responsive element-binding protein 2B">
    <location>
        <begin position="1"/>
        <end position="373"/>
    </location>
</feature>
<feature type="DNA-binding region" description="AP2/ERF" evidence="1">
    <location>
        <begin position="88"/>
        <end position="145"/>
    </location>
</feature>
<feature type="region of interest" description="Disordered" evidence="2">
    <location>
        <begin position="1"/>
        <end position="87"/>
    </location>
</feature>
<feature type="region of interest" description="Disordered" evidence="2">
    <location>
        <begin position="216"/>
        <end position="270"/>
    </location>
</feature>
<feature type="compositionally biased region" description="Basic residues" evidence="2">
    <location>
        <begin position="61"/>
        <end position="76"/>
    </location>
</feature>
<feature type="splice variant" id="VSP_039704" description="In isoform 2." evidence="4">
    <location>
        <begin position="1"/>
        <end position="75"/>
    </location>
</feature>
<feature type="splice variant" id="VSP_039705" description="In isoform 3." evidence="5">
    <original>KRPRRSRDGPTSVAETIKRWAELNNQQELDPQGPKKARKAPAKGSKKGCMKGKGGPENTRCDFRGVR</original>
    <variation>CGGEESTGNLDSVQPIGKSDHGDHAMDLLQLQRPSSGGPSSTISRSLIHRVQRRQGRHLQRVQRRAA</variation>
    <location>
        <begin position="27"/>
        <end position="93"/>
    </location>
</feature>
<feature type="splice variant" id="VSP_039706" description="In isoform 3." evidence="5">
    <location>
        <begin position="94"/>
        <end position="373"/>
    </location>
</feature>
<comment type="function">
    <text evidence="3">Transcriptional activator that binds specifically to the DNA sequence 5'-[AG]CCGAC-3' of the cis-acting dehydration-responsive element (DRE). Binding to the C-repeat/DRE element mediates high salinity- and dehydration-inducible transcription. Involved in drought and heat-shock stress tolerance.</text>
</comment>
<comment type="subcellular location">
    <subcellularLocation>
        <location evidence="1 3">Nucleus</location>
    </subcellularLocation>
</comment>
<comment type="alternative products">
    <event type="alternative splicing"/>
    <isoform>
        <id>Q5W6R4-1</id>
        <name>1</name>
        <name>DREB2B2</name>
        <sequence type="displayed"/>
    </isoform>
    <isoform>
        <id>Q5W6R4-2</id>
        <name>2</name>
        <sequence type="described" ref="VSP_039704"/>
    </isoform>
    <isoform>
        <id>Q5W6R4-3</id>
        <name>3</name>
        <name>DREB2B1</name>
        <sequence type="described" ref="VSP_039705 VSP_039706"/>
    </isoform>
</comment>
<comment type="induction">
    <text evidence="3">By heat shock, high-salt and drought stresses.</text>
</comment>
<comment type="miscellaneous">
    <molecule>Isoform 3</molecule>
    <text evidence="5">Inactive.</text>
</comment>
<comment type="similarity">
    <text evidence="5">Belongs to the AP2/ERF transcription factor family. ERF subfamily.</text>
</comment>
<gene>
    <name type="primary">DREB2B</name>
    <name type="synonym">ERF42</name>
    <name type="ordered locus">Os05g0346200</name>
    <name type="ordered locus">LOC_Os05g27930</name>
    <name type="ORF">B1036C05.12</name>
    <name type="ORF">B1164G01.2</name>
    <name type="ORF">OsJ_18158</name>
</gene>
<sequence>MTVDQRTTAKAIMPPVEMPPVQPGRKKRPRRSRDGPTSVAETIKRWAELNNQQELDPQGPKKARKAPAKGSKKGCMKGKGGPENTRCDFRGVRQRTWGKWVAEIREPNQQSRLWLGTFPTAEAAACAYDEAARAMYGPMARTNFGQHHAPAASVQVALAAVKCALPGGGLTASKSRTSTQGASADVQDVLTGGLSACESTTTTINNQSDVVSTLHKPEEVSEISSPLRAPPAVLEDGSNEDKAESVTYDENIVSQQRAPPEAEASNGRGEEVFEPLEPIASLPEDQGDYCFDIDEMLRMMEADPTNEGLWKGDKDGSDAILELGQDEPFYYEGVDPGMLDNLLRSDEPAWLLADPAMFISGGFEDDSQFFEGL</sequence>